<sequence length="522" mass="57280">METAVAYYKDGVPYDDKGQVIITLLNGTPDGSGSGGGGGKGGSKSESSAAIHATAKWSTAQLKKTQAEQAARAKAAAEAQAKAKANRDALTQRLKDIVNEALRHNASRTPSATELAHANNAAMQAEDERLRLAKAEEKARKEAEAAEKAFQEAEQRRKEIEREKAETERQLKLAEAEEKRLAALSEEAKAVEIAQKKLSAAQSEVVKMDGEIKTLNSRLSSSIHARDAEMKTLAGKRNELAQASAKYKELDELVKKLSPRANDPLQNRPFFEATRRRVGAGKIREEKQKQVTASETRINRINADITQIQKAISQVSNNRNAGIARVHEAEENLKKAQNNLLNSQIKDAVDATVSFYQTLTEKYGEKYSKMAQELADKSKGKKIGNVNEALAAFEKYKDVLNKKFSKADRDAIFNALASVKYDDWAKHLDQFAKYLKITGHVSFGYDVVSDILKIKDTGDWKPLFLTLEKKAADAGVSYVVALLFSLLAGTTLGIWGIAIVTGILCSYIDKNKLNTINEVLGI</sequence>
<feature type="chain" id="PRO_0000218668" description="Colicin-E1">
    <location>
        <begin position="1"/>
        <end position="522"/>
    </location>
</feature>
<feature type="transmembrane region" description="Helical" evidence="1">
    <location>
        <begin position="471"/>
        <end position="487"/>
    </location>
</feature>
<feature type="transmembrane region" description="Helical" evidence="1">
    <location>
        <begin position="494"/>
        <end position="510"/>
    </location>
</feature>
<feature type="region of interest" description="Disordered" evidence="2">
    <location>
        <begin position="26"/>
        <end position="52"/>
    </location>
</feature>
<feature type="region of interest" description="Disordered" evidence="2">
    <location>
        <begin position="136"/>
        <end position="165"/>
    </location>
</feature>
<feature type="compositionally biased region" description="Gly residues" evidence="2">
    <location>
        <begin position="30"/>
        <end position="42"/>
    </location>
</feature>
<feature type="helix" evidence="5">
    <location>
        <begin position="47"/>
        <end position="105"/>
    </location>
</feature>
<feature type="helix" evidence="5">
    <location>
        <begin position="112"/>
        <end position="130"/>
    </location>
</feature>
<feature type="helix" evidence="4">
    <location>
        <begin position="346"/>
        <end position="362"/>
    </location>
</feature>
<feature type="helix" evidence="4">
    <location>
        <begin position="365"/>
        <end position="378"/>
    </location>
</feature>
<feature type="helix" evidence="4">
    <location>
        <begin position="386"/>
        <end position="402"/>
    </location>
</feature>
<feature type="helix" evidence="4">
    <location>
        <begin position="406"/>
        <end position="416"/>
    </location>
</feature>
<feature type="helix" evidence="4">
    <location>
        <begin position="422"/>
        <end position="425"/>
    </location>
</feature>
<feature type="helix" evidence="4">
    <location>
        <begin position="428"/>
        <end position="434"/>
    </location>
</feature>
<feature type="helix" evidence="4">
    <location>
        <begin position="447"/>
        <end position="457"/>
    </location>
</feature>
<feature type="helix" evidence="4">
    <location>
        <begin position="461"/>
        <end position="471"/>
    </location>
</feature>
<feature type="helix" evidence="4">
    <location>
        <begin position="472"/>
        <end position="475"/>
    </location>
</feature>
<feature type="helix" evidence="4">
    <location>
        <begin position="476"/>
        <end position="488"/>
    </location>
</feature>
<feature type="helix" evidence="4">
    <location>
        <begin position="494"/>
        <end position="507"/>
    </location>
</feature>
<feature type="helix" evidence="4">
    <location>
        <begin position="513"/>
        <end position="515"/>
    </location>
</feature>
<feature type="helix" evidence="4">
    <location>
        <begin position="516"/>
        <end position="520"/>
    </location>
</feature>
<keyword id="KW-0002">3D-structure</keyword>
<keyword id="KW-0044">Antibiotic</keyword>
<keyword id="KW-0929">Antimicrobial</keyword>
<keyword id="KW-0078">Bacteriocin</keyword>
<keyword id="KW-1003">Cell membrane</keyword>
<keyword id="KW-0472">Membrane</keyword>
<keyword id="KW-0614">Plasmid</keyword>
<keyword id="KW-0812">Transmembrane</keyword>
<keyword id="KW-1133">Transmembrane helix</keyword>
<evidence type="ECO:0000255" key="1"/>
<evidence type="ECO:0000256" key="2">
    <source>
        <dbReference type="SAM" id="MobiDB-lite"/>
    </source>
</evidence>
<evidence type="ECO:0000305" key="3"/>
<evidence type="ECO:0007829" key="4">
    <source>
        <dbReference type="PDB" id="2I88"/>
    </source>
</evidence>
<evidence type="ECO:0007829" key="5">
    <source>
        <dbReference type="PDB" id="6WXH"/>
    </source>
</evidence>
<reference key="1">
    <citation type="journal article" date="1982" name="Proc. Natl. Acad. Sci. U.S.A.">
        <title>Nucleotide sequence of the structural gene for colicin E1 and predicted structure of the protein.</title>
        <authorList>
            <person name="Yamada M."/>
            <person name="Ebina Y."/>
            <person name="Miyata T."/>
            <person name="Nakazawa T."/>
            <person name="Nakazawa A."/>
        </authorList>
    </citation>
    <scope>NUCLEOTIDE SEQUENCE [GENOMIC DNA]</scope>
    <source>
        <plasmid>ColE1</plasmid>
    </source>
</reference>
<reference key="2">
    <citation type="journal article" date="1994" name="Proc. Natl. Acad. Sci. U.S.A.">
        <title>Nucleotide polymorphism in colicin E1 and Ia plasmids from natural isolates of Escherichia coli.</title>
        <authorList>
            <person name="Riley M.A."/>
            <person name="Tan Y."/>
            <person name="Wang J."/>
        </authorList>
    </citation>
    <scope>NUCLEOTIDE SEQUENCE [GENOMIC DNA]</scope>
    <source>
        <plasmid>ColE1-EC71</plasmid>
    </source>
</reference>
<reference key="3">
    <citation type="journal article" date="1981" name="Gene">
        <title>The nucleotide sequence surrounding the promoter region of colicin E1 gene.</title>
        <authorList>
            <person name="Ebina Y."/>
            <person name="Kishi F."/>
            <person name="Miki T."/>
            <person name="Kagamiyama H."/>
            <person name="Nakazawa T."/>
            <person name="Nakazawa A."/>
        </authorList>
    </citation>
    <scope>NUCLEOTIDE SEQUENCE [GENOMIC DNA] OF 1-71</scope>
    <source>
        <plasmid>ColE1</plasmid>
    </source>
</reference>
<reference key="4">
    <citation type="journal article" date="1979" name="Mol. Gen. Genet.">
        <title>Nucleotide sequence of small ColE1 derivatives: structure of the regions essential for autonomous replication and colicin E1 immunity.</title>
        <authorList>
            <person name="Oka A."/>
            <person name="Nomura N."/>
            <person name="Morita M."/>
            <person name="Sugisaki H."/>
            <person name="Sugimoto K."/>
            <person name="Takanami M."/>
        </authorList>
    </citation>
    <scope>NUCLEOTIDE SEQUENCE [GENOMIC DNA] OF 480-522</scope>
    <source>
        <plasmid>pAO3</plasmid>
    </source>
</reference>
<reference key="5">
    <citation type="journal article" date="1990" name="Eur. J. Biochem.">
        <title>Solution NMR studies of colicin E1 C-terminal thermolytic peptide. Structural comparison with colicin A and the effects of pH changes.</title>
        <authorList>
            <person name="Wormald M.R."/>
            <person name="Merril A.R."/>
            <person name="Cramer W.A."/>
            <person name="Williams R.J.P."/>
        </authorList>
    </citation>
    <scope>STRUCTURE BY NMR OF 345-522</scope>
</reference>
<organism>
    <name type="scientific">Escherichia coli</name>
    <dbReference type="NCBI Taxonomy" id="562"/>
    <lineage>
        <taxon>Bacteria</taxon>
        <taxon>Pseudomonadati</taxon>
        <taxon>Pseudomonadota</taxon>
        <taxon>Gammaproteobacteria</taxon>
        <taxon>Enterobacterales</taxon>
        <taxon>Enterobacteriaceae</taxon>
        <taxon>Escherichia</taxon>
    </lineage>
</organism>
<name>CEA1_ECOLX</name>
<accession>P02978</accession>
<comment type="function">
    <text>This colicin is a channel-forming colicin. This class of transmembrane toxins depolarize the cytoplasmic membrane, leading to dissipation of cellular energy.</text>
</comment>
<comment type="function">
    <text>Colicins are polypeptide toxins produced by and active against E.coli and closely related bacteria.</text>
</comment>
<comment type="subcellular location">
    <subcellularLocation>
        <location evidence="3">Cell membrane</location>
        <topology evidence="3">Multi-pass membrane protein</topology>
    </subcellularLocation>
</comment>
<comment type="miscellaneous">
    <text>Plasmid PAO3 is a small colicin E1 derivative.</text>
</comment>
<comment type="similarity">
    <text evidence="3">Belongs to the channel forming colicin family.</text>
</comment>
<gene>
    <name type="primary">cea</name>
</gene>
<proteinExistence type="evidence at protein level"/>
<dbReference type="EMBL" id="J01563">
    <property type="protein sequence ID" value="AAA87379.1"/>
    <property type="molecule type" value="Genomic_DNA"/>
</dbReference>
<dbReference type="EMBL" id="U15633">
    <property type="protein sequence ID" value="AAA59418.1"/>
    <property type="molecule type" value="Genomic_DNA"/>
</dbReference>
<dbReference type="PIR" id="A93913">
    <property type="entry name" value="IKEC1"/>
</dbReference>
<dbReference type="PDB" id="2I88">
    <property type="method" value="X-ray"/>
    <property type="resolution" value="2.50 A"/>
    <property type="chains" value="A=332-522"/>
</dbReference>
<dbReference type="PDB" id="6WXH">
    <property type="method" value="EM"/>
    <property type="resolution" value="3.09 A"/>
    <property type="chains" value="D=1-190"/>
</dbReference>
<dbReference type="PDBsum" id="2I88"/>
<dbReference type="PDBsum" id="6WXH"/>
<dbReference type="EMDB" id="EMD-21959"/>
<dbReference type="SMR" id="P02978"/>
<dbReference type="TCDB" id="1.C.1.2.2">
    <property type="family name" value="the channel-forming colicin (colicin) family"/>
</dbReference>
<dbReference type="EvolutionaryTrace" id="P02978"/>
<dbReference type="GO" id="GO:0005886">
    <property type="term" value="C:plasma membrane"/>
    <property type="evidence" value="ECO:0007669"/>
    <property type="project" value="UniProtKB-SubCell"/>
</dbReference>
<dbReference type="GO" id="GO:0140911">
    <property type="term" value="F:pore-forming activity"/>
    <property type="evidence" value="ECO:0007669"/>
    <property type="project" value="InterPro"/>
</dbReference>
<dbReference type="GO" id="GO:0044325">
    <property type="term" value="F:transmembrane transporter binding"/>
    <property type="evidence" value="ECO:0000353"/>
    <property type="project" value="CAFA"/>
</dbReference>
<dbReference type="GO" id="GO:0050829">
    <property type="term" value="P:defense response to Gram-negative bacterium"/>
    <property type="evidence" value="ECO:0007669"/>
    <property type="project" value="InterPro"/>
</dbReference>
<dbReference type="GO" id="GO:0031640">
    <property type="term" value="P:killing of cells of another organism"/>
    <property type="evidence" value="ECO:0007669"/>
    <property type="project" value="UniProtKB-KW"/>
</dbReference>
<dbReference type="GO" id="GO:0032413">
    <property type="term" value="P:negative regulation of ion transmembrane transporter activity"/>
    <property type="evidence" value="ECO:0000314"/>
    <property type="project" value="CAFA"/>
</dbReference>
<dbReference type="Gene3D" id="1.10.490.30">
    <property type="entry name" value="Colicin"/>
    <property type="match status" value="1"/>
</dbReference>
<dbReference type="Gene3D" id="1.10.287.620">
    <property type="entry name" value="Helix Hairpins"/>
    <property type="match status" value="1"/>
</dbReference>
<dbReference type="InterPro" id="IPR000293">
    <property type="entry name" value="Channel_colicin_C"/>
</dbReference>
<dbReference type="InterPro" id="IPR038283">
    <property type="entry name" value="Channel_colicin_C_sf"/>
</dbReference>
<dbReference type="Pfam" id="PF01024">
    <property type="entry name" value="Colicin"/>
    <property type="match status" value="1"/>
</dbReference>
<dbReference type="PRINTS" id="PR00280">
    <property type="entry name" value="CHANLCOLICIN"/>
</dbReference>
<dbReference type="SUPFAM" id="SSF56837">
    <property type="entry name" value="Colicin"/>
    <property type="match status" value="1"/>
</dbReference>
<dbReference type="PROSITE" id="PS00276">
    <property type="entry name" value="CHANNEL_COLICIN"/>
    <property type="match status" value="1"/>
</dbReference>
<protein>
    <recommendedName>
        <fullName>Colicin-E1</fullName>
    </recommendedName>
</protein>
<geneLocation type="plasmid">
    <name>ColE1</name>
</geneLocation>
<geneLocation type="plasmid">
    <name>ColE1-EC71</name>
</geneLocation>
<geneLocation type="plasmid">
    <name>pAO3</name>
</geneLocation>